<evidence type="ECO:0000255" key="1">
    <source>
        <dbReference type="HAMAP-Rule" id="MF_00530"/>
    </source>
</evidence>
<gene>
    <name evidence="1" type="primary">atpC</name>
    <name type="ordered locus">Plav_1466</name>
</gene>
<organism>
    <name type="scientific">Parvibaculum lavamentivorans (strain DS-1 / DSM 13023 / NCIMB 13966)</name>
    <dbReference type="NCBI Taxonomy" id="402881"/>
    <lineage>
        <taxon>Bacteria</taxon>
        <taxon>Pseudomonadati</taxon>
        <taxon>Pseudomonadota</taxon>
        <taxon>Alphaproteobacteria</taxon>
        <taxon>Hyphomicrobiales</taxon>
        <taxon>Parvibaculaceae</taxon>
        <taxon>Parvibaculum</taxon>
    </lineage>
</organism>
<sequence>MAEKLNFDLVSPERLLFSGQVDMVVIPGSEGDMGIMAGHAPVMSTLRPGIIEVENEGAPRQRIFVRGGFAEVTPAGLTVLAEFTVPLADLDATALDREIALADKDVADAKNDDKRQSALEKLDHLKELRHTV</sequence>
<protein>
    <recommendedName>
        <fullName evidence="1">ATP synthase epsilon chain</fullName>
    </recommendedName>
    <alternativeName>
        <fullName evidence="1">ATP synthase F1 sector epsilon subunit</fullName>
    </alternativeName>
    <alternativeName>
        <fullName evidence="1">F-ATPase epsilon subunit</fullName>
    </alternativeName>
</protein>
<feature type="chain" id="PRO_1000072501" description="ATP synthase epsilon chain">
    <location>
        <begin position="1"/>
        <end position="132"/>
    </location>
</feature>
<reference key="1">
    <citation type="journal article" date="2011" name="Stand. Genomic Sci.">
        <title>Complete genome sequence of Parvibaculum lavamentivorans type strain (DS-1(T)).</title>
        <authorList>
            <person name="Schleheck D."/>
            <person name="Weiss M."/>
            <person name="Pitluck S."/>
            <person name="Bruce D."/>
            <person name="Land M.L."/>
            <person name="Han S."/>
            <person name="Saunders E."/>
            <person name="Tapia R."/>
            <person name="Detter C."/>
            <person name="Brettin T."/>
            <person name="Han J."/>
            <person name="Woyke T."/>
            <person name="Goodwin L."/>
            <person name="Pennacchio L."/>
            <person name="Nolan M."/>
            <person name="Cook A.M."/>
            <person name="Kjelleberg S."/>
            <person name="Thomas T."/>
        </authorList>
    </citation>
    <scope>NUCLEOTIDE SEQUENCE [LARGE SCALE GENOMIC DNA]</scope>
    <source>
        <strain>DS-1 / DSM 13023 / NCIMB 13966</strain>
    </source>
</reference>
<proteinExistence type="inferred from homology"/>
<dbReference type="EMBL" id="CP000774">
    <property type="protein sequence ID" value="ABS63086.1"/>
    <property type="molecule type" value="Genomic_DNA"/>
</dbReference>
<dbReference type="RefSeq" id="WP_012110367.1">
    <property type="nucleotide sequence ID" value="NC_009719.1"/>
</dbReference>
<dbReference type="SMR" id="A7HT53"/>
<dbReference type="STRING" id="402881.Plav_1466"/>
<dbReference type="KEGG" id="pla:Plav_1466"/>
<dbReference type="eggNOG" id="COG0355">
    <property type="taxonomic scope" value="Bacteria"/>
</dbReference>
<dbReference type="HOGENOM" id="CLU_084338_2_1_5"/>
<dbReference type="OrthoDB" id="9799969at2"/>
<dbReference type="Proteomes" id="UP000006377">
    <property type="component" value="Chromosome"/>
</dbReference>
<dbReference type="GO" id="GO:0005886">
    <property type="term" value="C:plasma membrane"/>
    <property type="evidence" value="ECO:0007669"/>
    <property type="project" value="UniProtKB-SubCell"/>
</dbReference>
<dbReference type="GO" id="GO:0045259">
    <property type="term" value="C:proton-transporting ATP synthase complex"/>
    <property type="evidence" value="ECO:0007669"/>
    <property type="project" value="UniProtKB-KW"/>
</dbReference>
<dbReference type="GO" id="GO:0005524">
    <property type="term" value="F:ATP binding"/>
    <property type="evidence" value="ECO:0007669"/>
    <property type="project" value="UniProtKB-UniRule"/>
</dbReference>
<dbReference type="GO" id="GO:0046933">
    <property type="term" value="F:proton-transporting ATP synthase activity, rotational mechanism"/>
    <property type="evidence" value="ECO:0007669"/>
    <property type="project" value="UniProtKB-UniRule"/>
</dbReference>
<dbReference type="CDD" id="cd12152">
    <property type="entry name" value="F1-ATPase_delta"/>
    <property type="match status" value="1"/>
</dbReference>
<dbReference type="Gene3D" id="2.60.15.10">
    <property type="entry name" value="F0F1 ATP synthase delta/epsilon subunit, N-terminal"/>
    <property type="match status" value="1"/>
</dbReference>
<dbReference type="HAMAP" id="MF_00530">
    <property type="entry name" value="ATP_synth_epsil_bac"/>
    <property type="match status" value="1"/>
</dbReference>
<dbReference type="InterPro" id="IPR001469">
    <property type="entry name" value="ATP_synth_F1_dsu/esu"/>
</dbReference>
<dbReference type="InterPro" id="IPR020546">
    <property type="entry name" value="ATP_synth_F1_dsu/esu_N"/>
</dbReference>
<dbReference type="InterPro" id="IPR036771">
    <property type="entry name" value="ATPsynth_dsu/esu_N"/>
</dbReference>
<dbReference type="NCBIfam" id="TIGR01216">
    <property type="entry name" value="ATP_synt_epsi"/>
    <property type="match status" value="1"/>
</dbReference>
<dbReference type="NCBIfam" id="NF001851">
    <property type="entry name" value="PRK00571.2-4"/>
    <property type="match status" value="1"/>
</dbReference>
<dbReference type="NCBIfam" id="NF009983">
    <property type="entry name" value="PRK13449.1"/>
    <property type="match status" value="1"/>
</dbReference>
<dbReference type="PANTHER" id="PTHR13822">
    <property type="entry name" value="ATP SYNTHASE DELTA/EPSILON CHAIN"/>
    <property type="match status" value="1"/>
</dbReference>
<dbReference type="PANTHER" id="PTHR13822:SF10">
    <property type="entry name" value="ATP SYNTHASE EPSILON CHAIN, CHLOROPLASTIC"/>
    <property type="match status" value="1"/>
</dbReference>
<dbReference type="Pfam" id="PF02823">
    <property type="entry name" value="ATP-synt_DE_N"/>
    <property type="match status" value="1"/>
</dbReference>
<dbReference type="SUPFAM" id="SSF51344">
    <property type="entry name" value="Epsilon subunit of F1F0-ATP synthase N-terminal domain"/>
    <property type="match status" value="1"/>
</dbReference>
<keyword id="KW-0066">ATP synthesis</keyword>
<keyword id="KW-0997">Cell inner membrane</keyword>
<keyword id="KW-1003">Cell membrane</keyword>
<keyword id="KW-0139">CF(1)</keyword>
<keyword id="KW-0375">Hydrogen ion transport</keyword>
<keyword id="KW-0406">Ion transport</keyword>
<keyword id="KW-0472">Membrane</keyword>
<keyword id="KW-1185">Reference proteome</keyword>
<keyword id="KW-0813">Transport</keyword>
<name>ATPE_PARL1</name>
<comment type="function">
    <text evidence="1">Produces ATP from ADP in the presence of a proton gradient across the membrane.</text>
</comment>
<comment type="subunit">
    <text evidence="1">F-type ATPases have 2 components, CF(1) - the catalytic core - and CF(0) - the membrane proton channel. CF(1) has five subunits: alpha(3), beta(3), gamma(1), delta(1), epsilon(1). CF(0) has three main subunits: a, b and c.</text>
</comment>
<comment type="subcellular location">
    <subcellularLocation>
        <location evidence="1">Cell inner membrane</location>
        <topology evidence="1">Peripheral membrane protein</topology>
    </subcellularLocation>
</comment>
<comment type="similarity">
    <text evidence="1">Belongs to the ATPase epsilon chain family.</text>
</comment>
<accession>A7HT53</accession>